<feature type="chain" id="PRO_0000276858" description="Two pore channel protein 2">
    <location>
        <begin position="1"/>
        <end position="774"/>
    </location>
</feature>
<feature type="topological domain" description="Cytoplasmic" evidence="4">
    <location>
        <begin position="1"/>
        <end position="92"/>
    </location>
</feature>
<feature type="transmembrane region" description="Helical; Name=S1 of repeat I" evidence="4">
    <location>
        <begin position="93"/>
        <end position="113"/>
    </location>
</feature>
<feature type="topological domain" description="Extracellular" evidence="4">
    <location>
        <begin position="114"/>
        <end position="140"/>
    </location>
</feature>
<feature type="transmembrane region" description="Helical; Name=S2 of repeat I" evidence="4">
    <location>
        <begin position="141"/>
        <end position="161"/>
    </location>
</feature>
<feature type="topological domain" description="Cytoplasmic" evidence="4">
    <location>
        <begin position="162"/>
        <end position="170"/>
    </location>
</feature>
<feature type="transmembrane region" description="Helical; Name=S3 of repeat I" evidence="4">
    <location>
        <begin position="171"/>
        <end position="191"/>
    </location>
</feature>
<feature type="topological domain" description="Extracellular" evidence="4">
    <location>
        <begin position="192"/>
        <end position="197"/>
    </location>
</feature>
<feature type="transmembrane region" description="Helical; Name=S4 of repeat I" evidence="4">
    <location>
        <begin position="198"/>
        <end position="218"/>
    </location>
</feature>
<feature type="topological domain" description="Cytoplasmic" evidence="4">
    <location>
        <begin position="219"/>
        <end position="232"/>
    </location>
</feature>
<feature type="transmembrane region" description="Helical; Name=S5 of repeat I" evidence="4">
    <location>
        <begin position="233"/>
        <end position="253"/>
    </location>
</feature>
<feature type="topological domain" description="Extracellular" evidence="4">
    <location>
        <begin position="254"/>
        <end position="267"/>
    </location>
</feature>
<feature type="intramembrane region" description="Helical; Pore-forming" evidence="4">
    <location>
        <begin position="268"/>
        <end position="292"/>
    </location>
</feature>
<feature type="topological domain" description="Extracellular" evidence="4">
    <location>
        <begin position="293"/>
        <end position="302"/>
    </location>
</feature>
<feature type="transmembrane region" description="Helical; Name=S6 of repeat I" evidence="4">
    <location>
        <begin position="303"/>
        <end position="323"/>
    </location>
</feature>
<feature type="topological domain" description="Cytoplasmic" evidence="4">
    <location>
        <begin position="324"/>
        <end position="452"/>
    </location>
</feature>
<feature type="transmembrane region" description="Helical; Name=S1 of repeat II" evidence="4">
    <location>
        <begin position="453"/>
        <end position="475"/>
    </location>
</feature>
<feature type="topological domain" description="Extracellular" evidence="4">
    <location>
        <begin position="476"/>
        <end position="486"/>
    </location>
</feature>
<feature type="transmembrane region" description="Helical; Name=S2 of repeat II" evidence="4">
    <location>
        <begin position="487"/>
        <end position="507"/>
    </location>
</feature>
<feature type="topological domain" description="Cytoplasmic" evidence="4">
    <location>
        <begin position="508"/>
        <end position="518"/>
    </location>
</feature>
<feature type="transmembrane region" description="Helical; Name=S3 of repeat II" evidence="4">
    <location>
        <begin position="519"/>
        <end position="539"/>
    </location>
</feature>
<feature type="topological domain" description="Extracellular" evidence="4">
    <location>
        <begin position="540"/>
        <end position="564"/>
    </location>
</feature>
<feature type="transmembrane region" description="Helical; Name=S4 of repeat II" evidence="4">
    <location>
        <begin position="565"/>
        <end position="585"/>
    </location>
</feature>
<feature type="topological domain" description="Cytoplasmic" evidence="4">
    <location>
        <begin position="586"/>
        <end position="596"/>
    </location>
</feature>
<feature type="transmembrane region" description="Helical; Name=S5 of repeat II" evidence="4">
    <location>
        <begin position="597"/>
        <end position="617"/>
    </location>
</feature>
<feature type="topological domain" description="Extracellular" evidence="4">
    <location>
        <begin position="618"/>
        <end position="658"/>
    </location>
</feature>
<feature type="intramembrane region" description="Helical; Pore-forming" evidence="4">
    <location>
        <begin position="659"/>
        <end position="681"/>
    </location>
</feature>
<feature type="topological domain" description="Extracellular" evidence="4">
    <location>
        <begin position="682"/>
        <end position="696"/>
    </location>
</feature>
<feature type="transmembrane region" description="Helical; Name=S6 of repeat II" evidence="4">
    <location>
        <begin position="697"/>
        <end position="717"/>
    </location>
</feature>
<feature type="topological domain" description="Cytoplasmic" evidence="4">
    <location>
        <begin position="718"/>
        <end position="774"/>
    </location>
</feature>
<feature type="region of interest" description="Interaction with phosphatidylinositol 3,5-bisphosphate" evidence="3">
    <location>
        <begin position="217"/>
        <end position="221"/>
    </location>
</feature>
<feature type="glycosylation site" description="N-linked (GlcNAc...) asparagine" evidence="4">
    <location>
        <position position="626"/>
    </location>
</feature>
<feature type="glycosylation site" description="N-linked (GlcNAc...) asparagine" evidence="4">
    <location>
        <position position="632"/>
    </location>
</feature>
<feature type="glycosylation site" description="N-linked (GlcNAc...) asparagine" evidence="4">
    <location>
        <position position="637"/>
    </location>
</feature>
<gene>
    <name type="primary">tpcn2</name>
    <name type="synonym">tpc2</name>
    <name type="ORF">zgc:152898</name>
</gene>
<organism>
    <name type="scientific">Danio rerio</name>
    <name type="common">Zebrafish</name>
    <name type="synonym">Brachydanio rerio</name>
    <dbReference type="NCBI Taxonomy" id="7955"/>
    <lineage>
        <taxon>Eukaryota</taxon>
        <taxon>Metazoa</taxon>
        <taxon>Chordata</taxon>
        <taxon>Craniata</taxon>
        <taxon>Vertebrata</taxon>
        <taxon>Euteleostomi</taxon>
        <taxon>Actinopterygii</taxon>
        <taxon>Neopterygii</taxon>
        <taxon>Teleostei</taxon>
        <taxon>Ostariophysi</taxon>
        <taxon>Cypriniformes</taxon>
        <taxon>Danionidae</taxon>
        <taxon>Danioninae</taxon>
        <taxon>Danio</taxon>
    </lineage>
</organism>
<accession>A0JMD4</accession>
<protein>
    <recommendedName>
        <fullName>Two pore channel protein 2</fullName>
    </recommendedName>
    <alternativeName>
        <fullName>Two pore calcium channel protein 2</fullName>
    </alternativeName>
    <alternativeName>
        <fullName>Voltage-dependent calcium channel protein TPC2</fullName>
    </alternativeName>
</protein>
<keyword id="KW-0106">Calcium</keyword>
<keyword id="KW-0107">Calcium channel</keyword>
<keyword id="KW-0109">Calcium transport</keyword>
<keyword id="KW-0967">Endosome</keyword>
<keyword id="KW-0325">Glycoprotein</keyword>
<keyword id="KW-0407">Ion channel</keyword>
<keyword id="KW-0406">Ion transport</keyword>
<keyword id="KW-0458">Lysosome</keyword>
<keyword id="KW-0472">Membrane</keyword>
<keyword id="KW-1185">Reference proteome</keyword>
<keyword id="KW-0677">Repeat</keyword>
<keyword id="KW-0812">Transmembrane</keyword>
<keyword id="KW-1133">Transmembrane helix</keyword>
<keyword id="KW-0813">Transport</keyword>
<keyword id="KW-0851">Voltage-gated channel</keyword>
<proteinExistence type="evidence at transcript level"/>
<sequence length="774" mass="89184">MEEEPLLAGSINQGSGDYGAHSESCLHYPDEHTPRSRRLSYSVTDDSCNVEEDADADLYVQQAVVFIEDAIKYRSINHRVDSGSLRLYRWYYSNLCQWGLGLTIAVVLALAFIERPSSLTYTSDIRVKPKPWEPPCGMTEGIEIVCLCIFILDVTAKGYLIGWEEFRMNKWLLAYLIVITASVIDWMLSISMLCDENLRVRRLIRPFFLLQNSSLMKKTLKCIKRTLPEIASVILLLALHICLFTMIGMLIFAKSDDPKQNGEWQTYFRNLPKALSSLLVLLTTANNPDVMIPAYSLNRGYSIFFILFSVFGTYLLMNLMTAIIYNQFRGYLLMSVQTSIIRRRLGIRAAFEVLCCPGRGHTSTQAEGHVERVAVSMFLKVMERVHMKSYCRQAIVKAARRFPDGFISGEDFQRLFNELDKDFVKEHPPKPEYSSSGLQHIQYVYSHYYISVLGNAVALANVICICTVLVLNAEKSASEKNYFYMEIINCIFILYYLIEMLLKIVAFGWKGYLSYRNNIFDGFLTVLLLAIQIVIFITFKIPYVDVDPVPRHVMALWEMIRLVNMLIVFRFLRIIPEIKLMAVVASTIVDLVKNLRAFAGILLVVYYMFAVLGIWLFQGAISPPSNMSLVSNSSLENITGPYSMECGTFEQLEYWPNNFDDFASSLILLYNIMVVNNWHVFTDAYARYTTDWSLVYFVVWWLTSSVMWVNLFVALILENFTYKWDRSNGLSVEDVERIAYQSTVQLMFKEHVKEPTEEELLAQLHQHPHLHLSW</sequence>
<evidence type="ECO:0000250" key="1"/>
<evidence type="ECO:0000250" key="2">
    <source>
        <dbReference type="UniProtKB" id="Q8BWC0"/>
    </source>
</evidence>
<evidence type="ECO:0000250" key="3">
    <source>
        <dbReference type="UniProtKB" id="Q8NHX9"/>
    </source>
</evidence>
<evidence type="ECO:0000255" key="4"/>
<evidence type="ECO:0000305" key="5"/>
<comment type="function">
    <text evidence="3">Intracellular channel initially characterized as a non-selective Ca(2+)-permeable channel activated by NAADP (nicotinic acid adenine dinucleotide phosphate), it is also a highly-selective Na(+) channel activated directly by PI(3,5)P2 (phosphatidylinositol 3,5-bisphosphate). Localizes to the lysosomal and late endosome membranes where it regulates organellar membrane excitability, membrane trafficking, and pH homeostasis.</text>
</comment>
<comment type="catalytic activity">
    <reaction evidence="3">
        <text>Na(+)(in) = Na(+)(out)</text>
        <dbReference type="Rhea" id="RHEA:34963"/>
        <dbReference type="ChEBI" id="CHEBI:29101"/>
    </reaction>
    <physiologicalReaction direction="right-to-left" evidence="3">
        <dbReference type="Rhea" id="RHEA:34965"/>
    </physiologicalReaction>
</comment>
<comment type="catalytic activity">
    <reaction evidence="3">
        <text>Ca(2+)(in) = Ca(2+)(out)</text>
        <dbReference type="Rhea" id="RHEA:29671"/>
        <dbReference type="ChEBI" id="CHEBI:29108"/>
    </reaction>
    <physiologicalReaction direction="right-to-left" evidence="3">
        <dbReference type="Rhea" id="RHEA:29673"/>
    </physiologicalReaction>
</comment>
<comment type="subunit">
    <text evidence="2 3">Homodimer (By similarity).</text>
</comment>
<comment type="subcellular location">
    <subcellularLocation>
        <location evidence="3">Late endosome membrane</location>
        <topology evidence="4">Multi-pass membrane protein</topology>
    </subcellularLocation>
    <subcellularLocation>
        <location evidence="3">Lysosome membrane</location>
        <topology evidence="4">Multi-pass membrane protein</topology>
    </subcellularLocation>
</comment>
<comment type="domain">
    <text evidence="1">Each of the two internal repeats contains five hydrophobic transmembrane segments (S1, S2, S3, S5, S6) and one positively charged transmembrane segment (S4). S4 segments probably represent the voltage-sensor and are characterized by a series of positively charged amino acids at every third position (By similarity).</text>
</comment>
<comment type="PTM">
    <text evidence="2">N-glycosylated.</text>
</comment>
<comment type="similarity">
    <text evidence="5">Belongs to the calcium channel alpha-1 subunit (TC 1.A.1.11) family. Two pore calcium channel subfamily.</text>
</comment>
<dbReference type="EMBL" id="BC125833">
    <property type="protein sequence ID" value="AAI25834.1"/>
    <property type="molecule type" value="mRNA"/>
</dbReference>
<dbReference type="RefSeq" id="NP_001071190.1">
    <property type="nucleotide sequence ID" value="NM_001077722.1"/>
</dbReference>
<dbReference type="SMR" id="A0JMD4"/>
<dbReference type="FunCoup" id="A0JMD4">
    <property type="interactions" value="608"/>
</dbReference>
<dbReference type="STRING" id="7955.ENSDARP00000133679"/>
<dbReference type="GlyCosmos" id="A0JMD4">
    <property type="glycosylation" value="3 sites, No reported glycans"/>
</dbReference>
<dbReference type="PaxDb" id="7955-ENSDARP00000077125"/>
<dbReference type="GeneID" id="777614"/>
<dbReference type="KEGG" id="dre:777614"/>
<dbReference type="AGR" id="ZFIN:ZDB-GENE-061103-202"/>
<dbReference type="CTD" id="219931"/>
<dbReference type="ZFIN" id="ZDB-GENE-061103-202">
    <property type="gene designation" value="tpcn2"/>
</dbReference>
<dbReference type="eggNOG" id="KOG2301">
    <property type="taxonomic scope" value="Eukaryota"/>
</dbReference>
<dbReference type="InParanoid" id="A0JMD4"/>
<dbReference type="OrthoDB" id="416585at2759"/>
<dbReference type="PhylomeDB" id="A0JMD4"/>
<dbReference type="Reactome" id="R-DRE-2672351">
    <property type="pathway name" value="Stimuli-sensing channels"/>
</dbReference>
<dbReference type="PRO" id="PR:A0JMD4"/>
<dbReference type="Proteomes" id="UP000000437">
    <property type="component" value="Chromosome 7"/>
</dbReference>
<dbReference type="GO" id="GO:0031902">
    <property type="term" value="C:late endosome membrane"/>
    <property type="evidence" value="ECO:0007669"/>
    <property type="project" value="UniProtKB-SubCell"/>
</dbReference>
<dbReference type="GO" id="GO:0005765">
    <property type="term" value="C:lysosomal membrane"/>
    <property type="evidence" value="ECO:0000250"/>
    <property type="project" value="UniProtKB"/>
</dbReference>
<dbReference type="GO" id="GO:0005764">
    <property type="term" value="C:lysosome"/>
    <property type="evidence" value="ECO:0000250"/>
    <property type="project" value="UniProtKB"/>
</dbReference>
<dbReference type="GO" id="GO:0034702">
    <property type="term" value="C:monoatomic ion channel complex"/>
    <property type="evidence" value="ECO:0007669"/>
    <property type="project" value="UniProtKB-KW"/>
</dbReference>
<dbReference type="GO" id="GO:0042802">
    <property type="term" value="F:identical protein binding"/>
    <property type="evidence" value="ECO:0000250"/>
    <property type="project" value="UniProtKB"/>
</dbReference>
<dbReference type="GO" id="GO:0097682">
    <property type="term" value="F:intracellularly phosphatidylinositol-3,5-bisphosphate-gated monatomic cation channel activity"/>
    <property type="evidence" value="ECO:0000250"/>
    <property type="project" value="UniProtKB"/>
</dbReference>
<dbReference type="GO" id="GO:0015280">
    <property type="term" value="F:ligand-gated sodium channel activity"/>
    <property type="evidence" value="ECO:0000250"/>
    <property type="project" value="UniProtKB"/>
</dbReference>
<dbReference type="GO" id="GO:0072345">
    <property type="term" value="F:NAADP-sensitive calcium-release channel activity"/>
    <property type="evidence" value="ECO:0000250"/>
    <property type="project" value="UniProtKB"/>
</dbReference>
<dbReference type="GO" id="GO:0080025">
    <property type="term" value="F:phosphatidylinositol-3,5-bisphosphate binding"/>
    <property type="evidence" value="ECO:0000250"/>
    <property type="project" value="UniProtKB"/>
</dbReference>
<dbReference type="GO" id="GO:0005245">
    <property type="term" value="F:voltage-gated calcium channel activity"/>
    <property type="evidence" value="ECO:0000250"/>
    <property type="project" value="UniProtKB"/>
</dbReference>
<dbReference type="GO" id="GO:0019722">
    <property type="term" value="P:calcium-mediated signaling"/>
    <property type="evidence" value="ECO:0000315"/>
    <property type="project" value="ZFIN"/>
</dbReference>
<dbReference type="GO" id="GO:0075509">
    <property type="term" value="P:endocytosis involved in viral entry into host cell"/>
    <property type="evidence" value="ECO:0000318"/>
    <property type="project" value="GO_Central"/>
</dbReference>
<dbReference type="GO" id="GO:2000290">
    <property type="term" value="P:regulation of myotome development"/>
    <property type="evidence" value="ECO:0000315"/>
    <property type="project" value="ZFIN"/>
</dbReference>
<dbReference type="GO" id="GO:0014866">
    <property type="term" value="P:skeletal myofibril assembly"/>
    <property type="evidence" value="ECO:0000315"/>
    <property type="project" value="ZFIN"/>
</dbReference>
<dbReference type="GO" id="GO:0006939">
    <property type="term" value="P:smooth muscle contraction"/>
    <property type="evidence" value="ECO:0000250"/>
    <property type="project" value="UniProtKB"/>
</dbReference>
<dbReference type="GO" id="GO:0035725">
    <property type="term" value="P:sodium ion transmembrane transport"/>
    <property type="evidence" value="ECO:0000250"/>
    <property type="project" value="UniProtKB"/>
</dbReference>
<dbReference type="FunFam" id="1.10.287.70:FF:000129">
    <property type="entry name" value="Two pore calcium channel protein 1"/>
    <property type="match status" value="1"/>
</dbReference>
<dbReference type="FunFam" id="1.10.287.70:FF:000104">
    <property type="entry name" value="Two pore calcium channel protein 2"/>
    <property type="match status" value="1"/>
</dbReference>
<dbReference type="FunFam" id="1.20.120.350:FF:000073">
    <property type="entry name" value="Two pore segment channel 2"/>
    <property type="match status" value="1"/>
</dbReference>
<dbReference type="Gene3D" id="1.10.287.70">
    <property type="match status" value="2"/>
</dbReference>
<dbReference type="Gene3D" id="1.20.120.350">
    <property type="entry name" value="Voltage-gated potassium channels. Chain C"/>
    <property type="match status" value="2"/>
</dbReference>
<dbReference type="InterPro" id="IPR005821">
    <property type="entry name" value="Ion_trans_dom"/>
</dbReference>
<dbReference type="InterPro" id="IPR028798">
    <property type="entry name" value="TPC2"/>
</dbReference>
<dbReference type="InterPro" id="IPR027359">
    <property type="entry name" value="Volt_channel_dom_sf"/>
</dbReference>
<dbReference type="PANTHER" id="PTHR46768">
    <property type="entry name" value="TWO PORE CALCIUM CHANNEL PROTEIN 2"/>
    <property type="match status" value="1"/>
</dbReference>
<dbReference type="PANTHER" id="PTHR46768:SF1">
    <property type="entry name" value="TWO PORE CHANNEL PROTEIN 2"/>
    <property type="match status" value="1"/>
</dbReference>
<dbReference type="Pfam" id="PF00520">
    <property type="entry name" value="Ion_trans"/>
    <property type="match status" value="2"/>
</dbReference>
<dbReference type="SUPFAM" id="SSF81324">
    <property type="entry name" value="Voltage-gated potassium channels"/>
    <property type="match status" value="2"/>
</dbReference>
<reference key="1">
    <citation type="submission" date="2006-10" db="EMBL/GenBank/DDBJ databases">
        <authorList>
            <consortium name="NIH - Zebrafish Gene Collection (ZGC) project"/>
        </authorList>
    </citation>
    <scope>NUCLEOTIDE SEQUENCE [LARGE SCALE MRNA]</scope>
    <source>
        <strain>AB</strain>
    </source>
</reference>
<name>TPC2_DANRE</name>